<sequence length="65" mass="7749">MKALVGFRKKNKKDLYTELLQLLREQFNLRMQSVSGKLKQPHLLRKVRRNIAQVKTLLDSKEEIK</sequence>
<evidence type="ECO:0000255" key="1">
    <source>
        <dbReference type="HAMAP-Rule" id="MF_00374"/>
    </source>
</evidence>
<evidence type="ECO:0000305" key="2"/>
<comment type="similarity">
    <text evidence="1">Belongs to the universal ribosomal protein uL29 family.</text>
</comment>
<keyword id="KW-0687">Ribonucleoprotein</keyword>
<keyword id="KW-0689">Ribosomal protein</keyword>
<dbReference type="EMBL" id="CP001161">
    <property type="protein sequence ID" value="ACL30860.1"/>
    <property type="molecule type" value="Genomic_DNA"/>
</dbReference>
<dbReference type="RefSeq" id="WP_009874467.1">
    <property type="nucleotide sequence ID" value="NC_011833.1"/>
</dbReference>
<dbReference type="SMR" id="B8D9T9"/>
<dbReference type="KEGG" id="bap:BUAP5A_509"/>
<dbReference type="HOGENOM" id="CLU_158491_1_2_6"/>
<dbReference type="OrthoDB" id="9815192at2"/>
<dbReference type="Proteomes" id="UP000006904">
    <property type="component" value="Chromosome"/>
</dbReference>
<dbReference type="GO" id="GO:1990904">
    <property type="term" value="C:ribonucleoprotein complex"/>
    <property type="evidence" value="ECO:0007669"/>
    <property type="project" value="UniProtKB-KW"/>
</dbReference>
<dbReference type="GO" id="GO:0005840">
    <property type="term" value="C:ribosome"/>
    <property type="evidence" value="ECO:0007669"/>
    <property type="project" value="UniProtKB-KW"/>
</dbReference>
<dbReference type="GO" id="GO:0003735">
    <property type="term" value="F:structural constituent of ribosome"/>
    <property type="evidence" value="ECO:0007669"/>
    <property type="project" value="InterPro"/>
</dbReference>
<dbReference type="GO" id="GO:0006412">
    <property type="term" value="P:translation"/>
    <property type="evidence" value="ECO:0007669"/>
    <property type="project" value="UniProtKB-UniRule"/>
</dbReference>
<dbReference type="CDD" id="cd00427">
    <property type="entry name" value="Ribosomal_L29_HIP"/>
    <property type="match status" value="1"/>
</dbReference>
<dbReference type="FunFam" id="1.10.287.310:FF:000001">
    <property type="entry name" value="50S ribosomal protein L29"/>
    <property type="match status" value="1"/>
</dbReference>
<dbReference type="Gene3D" id="6.10.140.1970">
    <property type="match status" value="1"/>
</dbReference>
<dbReference type="HAMAP" id="MF_00374">
    <property type="entry name" value="Ribosomal_uL29"/>
    <property type="match status" value="1"/>
</dbReference>
<dbReference type="InterPro" id="IPR001854">
    <property type="entry name" value="Ribosomal_uL29"/>
</dbReference>
<dbReference type="InterPro" id="IPR018254">
    <property type="entry name" value="Ribosomal_uL29_CS"/>
</dbReference>
<dbReference type="InterPro" id="IPR036049">
    <property type="entry name" value="Ribosomal_uL29_sf"/>
</dbReference>
<dbReference type="NCBIfam" id="TIGR00012">
    <property type="entry name" value="L29"/>
    <property type="match status" value="1"/>
</dbReference>
<dbReference type="Pfam" id="PF00831">
    <property type="entry name" value="Ribosomal_L29"/>
    <property type="match status" value="1"/>
</dbReference>
<dbReference type="SUPFAM" id="SSF46561">
    <property type="entry name" value="Ribosomal protein L29 (L29p)"/>
    <property type="match status" value="1"/>
</dbReference>
<dbReference type="PROSITE" id="PS00579">
    <property type="entry name" value="RIBOSOMAL_L29"/>
    <property type="match status" value="1"/>
</dbReference>
<reference key="1">
    <citation type="journal article" date="2009" name="Science">
        <title>The dynamics and time scale of ongoing genomic erosion in symbiotic bacteria.</title>
        <authorList>
            <person name="Moran N.A."/>
            <person name="McLaughlin H.J."/>
            <person name="Sorek R."/>
        </authorList>
    </citation>
    <scope>NUCLEOTIDE SEQUENCE [LARGE SCALE GENOMIC DNA]</scope>
    <source>
        <strain>5A</strain>
    </source>
</reference>
<proteinExistence type="inferred from homology"/>
<protein>
    <recommendedName>
        <fullName evidence="1">Large ribosomal subunit protein uL29</fullName>
    </recommendedName>
    <alternativeName>
        <fullName evidence="2">50S ribosomal protein L29</fullName>
    </alternativeName>
</protein>
<accession>B8D9T9</accession>
<name>RL29_BUCA5</name>
<gene>
    <name evidence="1" type="primary">rpmC</name>
    <name type="ordered locus">BUAP5A_509</name>
</gene>
<organism>
    <name type="scientific">Buchnera aphidicola subsp. Acyrthosiphon pisum (strain 5A)</name>
    <dbReference type="NCBI Taxonomy" id="563178"/>
    <lineage>
        <taxon>Bacteria</taxon>
        <taxon>Pseudomonadati</taxon>
        <taxon>Pseudomonadota</taxon>
        <taxon>Gammaproteobacteria</taxon>
        <taxon>Enterobacterales</taxon>
        <taxon>Erwiniaceae</taxon>
        <taxon>Buchnera</taxon>
    </lineage>
</organism>
<feature type="chain" id="PRO_1000194000" description="Large ribosomal subunit protein uL29">
    <location>
        <begin position="1"/>
        <end position="65"/>
    </location>
</feature>